<comment type="sequence caution" evidence="2">
    <conflict type="erroneous gene model prediction">
        <sequence resource="EMBL-CDS" id="AAF29390"/>
    </conflict>
    <text>The predicted gene has been split into 2 genes: At1g05830 and At1g05835.</text>
</comment>
<comment type="sequence caution" evidence="2">
    <conflict type="erroneous initiation">
        <sequence resource="EMBL-CDS" id="AAL87299"/>
    </conflict>
</comment>
<evidence type="ECO:0000255" key="1"/>
<evidence type="ECO:0000305" key="2"/>
<accession>A8MS78</accession>
<accession>Q8RXL4</accession>
<accession>Q9MA43</accession>
<protein>
    <recommendedName>
        <fullName>Uncharacterized protein At1g05835</fullName>
    </recommendedName>
</protein>
<gene>
    <name type="ordered locus">At1g05835</name>
    <name type="ORF">T20M3.10</name>
</gene>
<keyword id="KW-1185">Reference proteome</keyword>
<keyword id="KW-0732">Signal</keyword>
<name>Y1583_ARATH</name>
<organism>
    <name type="scientific">Arabidopsis thaliana</name>
    <name type="common">Mouse-ear cress</name>
    <dbReference type="NCBI Taxonomy" id="3702"/>
    <lineage>
        <taxon>Eukaryota</taxon>
        <taxon>Viridiplantae</taxon>
        <taxon>Streptophyta</taxon>
        <taxon>Embryophyta</taxon>
        <taxon>Tracheophyta</taxon>
        <taxon>Spermatophyta</taxon>
        <taxon>Magnoliopsida</taxon>
        <taxon>eudicotyledons</taxon>
        <taxon>Gunneridae</taxon>
        <taxon>Pentapetalae</taxon>
        <taxon>rosids</taxon>
        <taxon>malvids</taxon>
        <taxon>Brassicales</taxon>
        <taxon>Brassicaceae</taxon>
        <taxon>Camelineae</taxon>
        <taxon>Arabidopsis</taxon>
    </lineage>
</organism>
<sequence length="127" mass="14221">MSKPLKFLLWSSLALLLLQIGSGAICEGKSSEPAVRQTQVKWREGKKFRVEVMNKCPMCPIINLRLKCQGFPQSLVDPTFLRVLSSSAGNCVVNDGLPLSPMQTLSFNYSNTHQFALRPLSWSFQCE</sequence>
<proteinExistence type="evidence at transcript level"/>
<feature type="signal peptide" evidence="1">
    <location>
        <begin position="1"/>
        <end position="23"/>
    </location>
</feature>
<feature type="chain" id="PRO_0000381975" description="Uncharacterized protein At1g05835">
    <location>
        <begin position="24"/>
        <end position="127"/>
    </location>
</feature>
<feature type="sequence conflict" description="In Ref. 4; AAL87299." evidence="2" ref="4">
    <original>A</original>
    <variation>D</variation>
    <location>
        <position position="14"/>
    </location>
</feature>
<reference key="1">
    <citation type="journal article" date="2000" name="Nature">
        <title>Sequence and analysis of chromosome 1 of the plant Arabidopsis thaliana.</title>
        <authorList>
            <person name="Theologis A."/>
            <person name="Ecker J.R."/>
            <person name="Palm C.J."/>
            <person name="Federspiel N.A."/>
            <person name="Kaul S."/>
            <person name="White O."/>
            <person name="Alonso J."/>
            <person name="Altafi H."/>
            <person name="Araujo R."/>
            <person name="Bowman C.L."/>
            <person name="Brooks S.Y."/>
            <person name="Buehler E."/>
            <person name="Chan A."/>
            <person name="Chao Q."/>
            <person name="Chen H."/>
            <person name="Cheuk R.F."/>
            <person name="Chin C.W."/>
            <person name="Chung M.K."/>
            <person name="Conn L."/>
            <person name="Conway A.B."/>
            <person name="Conway A.R."/>
            <person name="Creasy T.H."/>
            <person name="Dewar K."/>
            <person name="Dunn P."/>
            <person name="Etgu P."/>
            <person name="Feldblyum T.V."/>
            <person name="Feng J.-D."/>
            <person name="Fong B."/>
            <person name="Fujii C.Y."/>
            <person name="Gill J.E."/>
            <person name="Goldsmith A.D."/>
            <person name="Haas B."/>
            <person name="Hansen N.F."/>
            <person name="Hughes B."/>
            <person name="Huizar L."/>
            <person name="Hunter J.L."/>
            <person name="Jenkins J."/>
            <person name="Johnson-Hopson C."/>
            <person name="Khan S."/>
            <person name="Khaykin E."/>
            <person name="Kim C.J."/>
            <person name="Koo H.L."/>
            <person name="Kremenetskaia I."/>
            <person name="Kurtz D.B."/>
            <person name="Kwan A."/>
            <person name="Lam B."/>
            <person name="Langin-Hooper S."/>
            <person name="Lee A."/>
            <person name="Lee J.M."/>
            <person name="Lenz C.A."/>
            <person name="Li J.H."/>
            <person name="Li Y.-P."/>
            <person name="Lin X."/>
            <person name="Liu S.X."/>
            <person name="Liu Z.A."/>
            <person name="Luros J.S."/>
            <person name="Maiti R."/>
            <person name="Marziali A."/>
            <person name="Militscher J."/>
            <person name="Miranda M."/>
            <person name="Nguyen M."/>
            <person name="Nierman W.C."/>
            <person name="Osborne B.I."/>
            <person name="Pai G."/>
            <person name="Peterson J."/>
            <person name="Pham P.K."/>
            <person name="Rizzo M."/>
            <person name="Rooney T."/>
            <person name="Rowley D."/>
            <person name="Sakano H."/>
            <person name="Salzberg S.L."/>
            <person name="Schwartz J.R."/>
            <person name="Shinn P."/>
            <person name="Southwick A.M."/>
            <person name="Sun H."/>
            <person name="Tallon L.J."/>
            <person name="Tambunga G."/>
            <person name="Toriumi M.J."/>
            <person name="Town C.D."/>
            <person name="Utterback T."/>
            <person name="Van Aken S."/>
            <person name="Vaysberg M."/>
            <person name="Vysotskaia V.S."/>
            <person name="Walker M."/>
            <person name="Wu D."/>
            <person name="Yu G."/>
            <person name="Fraser C.M."/>
            <person name="Venter J.C."/>
            <person name="Davis R.W."/>
        </authorList>
    </citation>
    <scope>NUCLEOTIDE SEQUENCE [LARGE SCALE GENOMIC DNA]</scope>
    <source>
        <strain>cv. Columbia</strain>
    </source>
</reference>
<reference key="2">
    <citation type="journal article" date="2017" name="Plant J.">
        <title>Araport11: a complete reannotation of the Arabidopsis thaliana reference genome.</title>
        <authorList>
            <person name="Cheng C.Y."/>
            <person name="Krishnakumar V."/>
            <person name="Chan A.P."/>
            <person name="Thibaud-Nissen F."/>
            <person name="Schobel S."/>
            <person name="Town C.D."/>
        </authorList>
    </citation>
    <scope>GENOME REANNOTATION</scope>
    <source>
        <strain>cv. Columbia</strain>
    </source>
</reference>
<reference key="3">
    <citation type="journal article" date="2003" name="Science">
        <title>Empirical analysis of transcriptional activity in the Arabidopsis genome.</title>
        <authorList>
            <person name="Yamada K."/>
            <person name="Lim J."/>
            <person name="Dale J.M."/>
            <person name="Chen H."/>
            <person name="Shinn P."/>
            <person name="Palm C.J."/>
            <person name="Southwick A.M."/>
            <person name="Wu H.C."/>
            <person name="Kim C.J."/>
            <person name="Nguyen M."/>
            <person name="Pham P.K."/>
            <person name="Cheuk R.F."/>
            <person name="Karlin-Newmann G."/>
            <person name="Liu S.X."/>
            <person name="Lam B."/>
            <person name="Sakano H."/>
            <person name="Wu T."/>
            <person name="Yu G."/>
            <person name="Miranda M."/>
            <person name="Quach H.L."/>
            <person name="Tripp M."/>
            <person name="Chang C.H."/>
            <person name="Lee J.M."/>
            <person name="Toriumi M.J."/>
            <person name="Chan M.M."/>
            <person name="Tang C.C."/>
            <person name="Onodera C.S."/>
            <person name="Deng J.M."/>
            <person name="Akiyama K."/>
            <person name="Ansari Y."/>
            <person name="Arakawa T."/>
            <person name="Banh J."/>
            <person name="Banno F."/>
            <person name="Bowser L."/>
            <person name="Brooks S.Y."/>
            <person name="Carninci P."/>
            <person name="Chao Q."/>
            <person name="Choy N."/>
            <person name="Enju A."/>
            <person name="Goldsmith A.D."/>
            <person name="Gurjal M."/>
            <person name="Hansen N.F."/>
            <person name="Hayashizaki Y."/>
            <person name="Johnson-Hopson C."/>
            <person name="Hsuan V.W."/>
            <person name="Iida K."/>
            <person name="Karnes M."/>
            <person name="Khan S."/>
            <person name="Koesema E."/>
            <person name="Ishida J."/>
            <person name="Jiang P.X."/>
            <person name="Jones T."/>
            <person name="Kawai J."/>
            <person name="Kamiya A."/>
            <person name="Meyers C."/>
            <person name="Nakajima M."/>
            <person name="Narusaka M."/>
            <person name="Seki M."/>
            <person name="Sakurai T."/>
            <person name="Satou M."/>
            <person name="Tamse R."/>
            <person name="Vaysberg M."/>
            <person name="Wallender E.K."/>
            <person name="Wong C."/>
            <person name="Yamamura Y."/>
            <person name="Yuan S."/>
            <person name="Shinozaki K."/>
            <person name="Davis R.W."/>
            <person name="Theologis A."/>
            <person name="Ecker J.R."/>
        </authorList>
    </citation>
    <scope>NUCLEOTIDE SEQUENCE [LARGE SCALE MRNA]</scope>
    <source>
        <strain>cv. Columbia</strain>
    </source>
</reference>
<reference key="4">
    <citation type="submission" date="2005-06" db="EMBL/GenBank/DDBJ databases">
        <title>Full-length cDNA from Arabidopsis thaliana.</title>
        <authorList>
            <person name="Alexandrov N.N."/>
            <person name="Brover V.V."/>
            <person name="Troukhan M.E."/>
            <person name="Lu Y.-P."/>
            <person name="Flavell R.B."/>
            <person name="Feldmann K.A."/>
        </authorList>
    </citation>
    <scope>NUCLEOTIDE SEQUENCE [LARGE SCALE MRNA]</scope>
</reference>
<dbReference type="EMBL" id="AC009999">
    <property type="protein sequence ID" value="AAF29390.1"/>
    <property type="status" value="ALT_SEQ"/>
    <property type="molecule type" value="Genomic_DNA"/>
</dbReference>
<dbReference type="EMBL" id="CP002684">
    <property type="protein sequence ID" value="AEE27902.1"/>
    <property type="molecule type" value="Genomic_DNA"/>
</dbReference>
<dbReference type="EMBL" id="AY080821">
    <property type="protein sequence ID" value="AAL87299.1"/>
    <property type="status" value="ALT_INIT"/>
    <property type="molecule type" value="mRNA"/>
</dbReference>
<dbReference type="EMBL" id="DQ108722">
    <property type="status" value="NOT_ANNOTATED_CDS"/>
    <property type="molecule type" value="mRNA"/>
</dbReference>
<dbReference type="PIR" id="A86193">
    <property type="entry name" value="A86193"/>
</dbReference>
<dbReference type="RefSeq" id="NP_001077465.1">
    <property type="nucleotide sequence ID" value="NM_001083996.3"/>
</dbReference>
<dbReference type="FunCoup" id="A8MS78">
    <property type="interactions" value="57"/>
</dbReference>
<dbReference type="STRING" id="3702.A8MS78"/>
<dbReference type="PaxDb" id="3702-AT1G05835.1"/>
<dbReference type="ProteomicsDB" id="242392"/>
<dbReference type="EnsemblPlants" id="AT1G05835.1">
    <property type="protein sequence ID" value="AT1G05835.1"/>
    <property type="gene ID" value="AT1G05835"/>
</dbReference>
<dbReference type="GeneID" id="5007665"/>
<dbReference type="Gramene" id="AT1G05835.1">
    <property type="protein sequence ID" value="AT1G05835.1"/>
    <property type="gene ID" value="AT1G05835"/>
</dbReference>
<dbReference type="KEGG" id="ath:AT1G05835"/>
<dbReference type="Araport" id="AT1G05835"/>
<dbReference type="TAIR" id="AT1G05835"/>
<dbReference type="eggNOG" id="KOG1080">
    <property type="taxonomic scope" value="Eukaryota"/>
</dbReference>
<dbReference type="HOGENOM" id="CLU_102808_2_0_1"/>
<dbReference type="InParanoid" id="A8MS78"/>
<dbReference type="OMA" id="NNCPMCP"/>
<dbReference type="PhylomeDB" id="A8MS78"/>
<dbReference type="PRO" id="PR:A8MS78"/>
<dbReference type="Proteomes" id="UP000006548">
    <property type="component" value="Chromosome 1"/>
</dbReference>
<dbReference type="ExpressionAtlas" id="A8MS78">
    <property type="expression patterns" value="baseline and differential"/>
</dbReference>
<dbReference type="InterPro" id="IPR040361">
    <property type="entry name" value="TPD1"/>
</dbReference>
<dbReference type="PANTHER" id="PTHR33184:SF36">
    <property type="entry name" value="EXPANSIN-LIKE EG45 DOMAIN-CONTAINING PROTEIN"/>
    <property type="match status" value="1"/>
</dbReference>
<dbReference type="PANTHER" id="PTHR33184">
    <property type="entry name" value="PROTEIN TAPETUM DETERMINANT 1-LIKE-RELATED"/>
    <property type="match status" value="1"/>
</dbReference>
<dbReference type="Pfam" id="PF24068">
    <property type="entry name" value="TPD1_C"/>
    <property type="match status" value="1"/>
</dbReference>